<name>Y0825_DICDI</name>
<proteinExistence type="inferred from homology"/>
<organism>
    <name type="scientific">Dictyostelium discoideum</name>
    <name type="common">Social amoeba</name>
    <dbReference type="NCBI Taxonomy" id="44689"/>
    <lineage>
        <taxon>Eukaryota</taxon>
        <taxon>Amoebozoa</taxon>
        <taxon>Evosea</taxon>
        <taxon>Eumycetozoa</taxon>
        <taxon>Dictyostelia</taxon>
        <taxon>Dictyosteliales</taxon>
        <taxon>Dictyosteliaceae</taxon>
        <taxon>Dictyostelium</taxon>
    </lineage>
</organism>
<accession>Q54UU2</accession>
<dbReference type="EC" id="2.3.1.-"/>
<dbReference type="EMBL" id="AAFI02000025">
    <property type="protein sequence ID" value="EAL67024.1"/>
    <property type="molecule type" value="Genomic_DNA"/>
</dbReference>
<dbReference type="RefSeq" id="XP_640999.1">
    <property type="nucleotide sequence ID" value="XM_635907.1"/>
</dbReference>
<dbReference type="SMR" id="Q54UU2"/>
<dbReference type="BioGRID" id="1246807">
    <property type="interactions" value="1"/>
</dbReference>
<dbReference type="FunCoup" id="Q54UU2">
    <property type="interactions" value="149"/>
</dbReference>
<dbReference type="STRING" id="44689.Q54UU2"/>
<dbReference type="PaxDb" id="44689-DDB0204747"/>
<dbReference type="EnsemblProtists" id="EAL67024">
    <property type="protein sequence ID" value="EAL67024"/>
    <property type="gene ID" value="DDB_G0280825"/>
</dbReference>
<dbReference type="GeneID" id="8621804"/>
<dbReference type="KEGG" id="ddi:DDB_G0280825"/>
<dbReference type="dictyBase" id="DDB_G0280825"/>
<dbReference type="VEuPathDB" id="AmoebaDB:DDB_G0280825"/>
<dbReference type="eggNOG" id="KOG4750">
    <property type="taxonomic scope" value="Eukaryota"/>
</dbReference>
<dbReference type="HOGENOM" id="CLU_051638_3_0_1"/>
<dbReference type="InParanoid" id="Q54UU2"/>
<dbReference type="OMA" id="FYSGTHP"/>
<dbReference type="PhylomeDB" id="Q54UU2"/>
<dbReference type="PRO" id="PR:Q54UU2"/>
<dbReference type="Proteomes" id="UP000002195">
    <property type="component" value="Chromosome 3"/>
</dbReference>
<dbReference type="GO" id="GO:0016407">
    <property type="term" value="F:acetyltransferase activity"/>
    <property type="evidence" value="ECO:0007669"/>
    <property type="project" value="InterPro"/>
</dbReference>
<dbReference type="GO" id="GO:0008374">
    <property type="term" value="F:O-acyltransferase activity"/>
    <property type="evidence" value="ECO:0000318"/>
    <property type="project" value="GO_Central"/>
</dbReference>
<dbReference type="CDD" id="cd03357">
    <property type="entry name" value="LbH_MAT_GAT"/>
    <property type="match status" value="1"/>
</dbReference>
<dbReference type="FunFam" id="2.160.10.10:FF:000008">
    <property type="entry name" value="Maltose O-acetyltransferase"/>
    <property type="match status" value="1"/>
</dbReference>
<dbReference type="Gene3D" id="2.160.10.10">
    <property type="entry name" value="Hexapeptide repeat proteins"/>
    <property type="match status" value="1"/>
</dbReference>
<dbReference type="InterPro" id="IPR001451">
    <property type="entry name" value="Hexapep"/>
</dbReference>
<dbReference type="InterPro" id="IPR051159">
    <property type="entry name" value="Hexapeptide_acetyltransf"/>
</dbReference>
<dbReference type="InterPro" id="IPR024688">
    <property type="entry name" value="Mac_dom"/>
</dbReference>
<dbReference type="InterPro" id="IPR011004">
    <property type="entry name" value="Trimer_LpxA-like_sf"/>
</dbReference>
<dbReference type="PANTHER" id="PTHR23416:SF23">
    <property type="entry name" value="ACETYLTRANSFERASE C18B11.09C-RELATED"/>
    <property type="match status" value="1"/>
</dbReference>
<dbReference type="PANTHER" id="PTHR23416">
    <property type="entry name" value="SIALIC ACID SYNTHASE-RELATED"/>
    <property type="match status" value="1"/>
</dbReference>
<dbReference type="Pfam" id="PF00132">
    <property type="entry name" value="Hexapep"/>
    <property type="match status" value="1"/>
</dbReference>
<dbReference type="Pfam" id="PF12464">
    <property type="entry name" value="Mac"/>
    <property type="match status" value="1"/>
</dbReference>
<dbReference type="SMART" id="SM01266">
    <property type="entry name" value="Mac"/>
    <property type="match status" value="1"/>
</dbReference>
<dbReference type="SUPFAM" id="SSF51161">
    <property type="entry name" value="Trimeric LpxA-like enzymes"/>
    <property type="match status" value="1"/>
</dbReference>
<feature type="chain" id="PRO_0000367262" description="Putative acetyltransferase DDB_G0280825">
    <location>
        <begin position="1"/>
        <end position="191"/>
    </location>
</feature>
<sequence>MDSINMTEKEKMTKGLMYDSFDEELCKDRTEARELIHRFNNSMDKLERKDITKQLFGSTGEKIYIEPTLRVDYGYNIHVGENFFANFGTIFLDTCPITIGKNAMLAPNVQFYSATHPIDPTERNSGLELGRPITIGDNVWIGGGVIILPGVELGDNVVVGAGAVVTKSFGSNVVIAGNPAKIIKQIPVKSE</sequence>
<gene>
    <name type="ORF">DDB_G0280825</name>
</gene>
<reference key="1">
    <citation type="journal article" date="2005" name="Nature">
        <title>The genome of the social amoeba Dictyostelium discoideum.</title>
        <authorList>
            <person name="Eichinger L."/>
            <person name="Pachebat J.A."/>
            <person name="Gloeckner G."/>
            <person name="Rajandream M.A."/>
            <person name="Sucgang R."/>
            <person name="Berriman M."/>
            <person name="Song J."/>
            <person name="Olsen R."/>
            <person name="Szafranski K."/>
            <person name="Xu Q."/>
            <person name="Tunggal B."/>
            <person name="Kummerfeld S."/>
            <person name="Madera M."/>
            <person name="Konfortov B.A."/>
            <person name="Rivero F."/>
            <person name="Bankier A.T."/>
            <person name="Lehmann R."/>
            <person name="Hamlin N."/>
            <person name="Davies R."/>
            <person name="Gaudet P."/>
            <person name="Fey P."/>
            <person name="Pilcher K."/>
            <person name="Chen G."/>
            <person name="Saunders D."/>
            <person name="Sodergren E.J."/>
            <person name="Davis P."/>
            <person name="Kerhornou A."/>
            <person name="Nie X."/>
            <person name="Hall N."/>
            <person name="Anjard C."/>
            <person name="Hemphill L."/>
            <person name="Bason N."/>
            <person name="Farbrother P."/>
            <person name="Desany B."/>
            <person name="Just E."/>
            <person name="Morio T."/>
            <person name="Rost R."/>
            <person name="Churcher C.M."/>
            <person name="Cooper J."/>
            <person name="Haydock S."/>
            <person name="van Driessche N."/>
            <person name="Cronin A."/>
            <person name="Goodhead I."/>
            <person name="Muzny D.M."/>
            <person name="Mourier T."/>
            <person name="Pain A."/>
            <person name="Lu M."/>
            <person name="Harper D."/>
            <person name="Lindsay R."/>
            <person name="Hauser H."/>
            <person name="James K.D."/>
            <person name="Quiles M."/>
            <person name="Madan Babu M."/>
            <person name="Saito T."/>
            <person name="Buchrieser C."/>
            <person name="Wardroper A."/>
            <person name="Felder M."/>
            <person name="Thangavelu M."/>
            <person name="Johnson D."/>
            <person name="Knights A."/>
            <person name="Loulseged H."/>
            <person name="Mungall K.L."/>
            <person name="Oliver K."/>
            <person name="Price C."/>
            <person name="Quail M.A."/>
            <person name="Urushihara H."/>
            <person name="Hernandez J."/>
            <person name="Rabbinowitsch E."/>
            <person name="Steffen D."/>
            <person name="Sanders M."/>
            <person name="Ma J."/>
            <person name="Kohara Y."/>
            <person name="Sharp S."/>
            <person name="Simmonds M.N."/>
            <person name="Spiegler S."/>
            <person name="Tivey A."/>
            <person name="Sugano S."/>
            <person name="White B."/>
            <person name="Walker D."/>
            <person name="Woodward J.R."/>
            <person name="Winckler T."/>
            <person name="Tanaka Y."/>
            <person name="Shaulsky G."/>
            <person name="Schleicher M."/>
            <person name="Weinstock G.M."/>
            <person name="Rosenthal A."/>
            <person name="Cox E.C."/>
            <person name="Chisholm R.L."/>
            <person name="Gibbs R.A."/>
            <person name="Loomis W.F."/>
            <person name="Platzer M."/>
            <person name="Kay R.R."/>
            <person name="Williams J.G."/>
            <person name="Dear P.H."/>
            <person name="Noegel A.A."/>
            <person name="Barrell B.G."/>
            <person name="Kuspa A."/>
        </authorList>
    </citation>
    <scope>NUCLEOTIDE SEQUENCE [LARGE SCALE GENOMIC DNA]</scope>
    <source>
        <strain>AX4</strain>
    </source>
</reference>
<keyword id="KW-0012">Acyltransferase</keyword>
<keyword id="KW-1185">Reference proteome</keyword>
<keyword id="KW-0808">Transferase</keyword>
<protein>
    <recommendedName>
        <fullName>Putative acetyltransferase DDB_G0280825</fullName>
        <ecNumber>2.3.1.-</ecNumber>
    </recommendedName>
</protein>
<evidence type="ECO:0000305" key="1"/>
<comment type="similarity">
    <text evidence="1">Belongs to the transferase hexapeptide repeat family.</text>
</comment>